<reference key="1">
    <citation type="journal article" date="2000" name="Nature">
        <title>Complete DNA sequence of a serogroup A strain of Neisseria meningitidis Z2491.</title>
        <authorList>
            <person name="Parkhill J."/>
            <person name="Achtman M."/>
            <person name="James K.D."/>
            <person name="Bentley S.D."/>
            <person name="Churcher C.M."/>
            <person name="Klee S.R."/>
            <person name="Morelli G."/>
            <person name="Basham D."/>
            <person name="Brown D."/>
            <person name="Chillingworth T."/>
            <person name="Davies R.M."/>
            <person name="Davis P."/>
            <person name="Devlin K."/>
            <person name="Feltwell T."/>
            <person name="Hamlin N."/>
            <person name="Holroyd S."/>
            <person name="Jagels K."/>
            <person name="Leather S."/>
            <person name="Moule S."/>
            <person name="Mungall K.L."/>
            <person name="Quail M.A."/>
            <person name="Rajandream M.A."/>
            <person name="Rutherford K.M."/>
            <person name="Simmonds M."/>
            <person name="Skelton J."/>
            <person name="Whitehead S."/>
            <person name="Spratt B.G."/>
            <person name="Barrell B.G."/>
        </authorList>
    </citation>
    <scope>NUCLEOTIDE SEQUENCE [LARGE SCALE GENOMIC DNA]</scope>
    <source>
        <strain>DSM 15465 / Z2491</strain>
    </source>
</reference>
<name>ISPE_NEIMA</name>
<gene>
    <name evidence="1" type="primary">ispE</name>
    <name type="ordered locus">NMA1092</name>
</gene>
<keyword id="KW-0067">ATP-binding</keyword>
<keyword id="KW-0414">Isoprene biosynthesis</keyword>
<keyword id="KW-0418">Kinase</keyword>
<keyword id="KW-0547">Nucleotide-binding</keyword>
<keyword id="KW-0808">Transferase</keyword>
<organism>
    <name type="scientific">Neisseria meningitidis serogroup A / serotype 4A (strain DSM 15465 / Z2491)</name>
    <dbReference type="NCBI Taxonomy" id="122587"/>
    <lineage>
        <taxon>Bacteria</taxon>
        <taxon>Pseudomonadati</taxon>
        <taxon>Pseudomonadota</taxon>
        <taxon>Betaproteobacteria</taxon>
        <taxon>Neisseriales</taxon>
        <taxon>Neisseriaceae</taxon>
        <taxon>Neisseria</taxon>
    </lineage>
</organism>
<dbReference type="EC" id="2.7.1.148" evidence="1"/>
<dbReference type="EMBL" id="AL157959">
    <property type="protein sequence ID" value="CAM08303.1"/>
    <property type="molecule type" value="Genomic_DNA"/>
</dbReference>
<dbReference type="PIR" id="A81875">
    <property type="entry name" value="A81875"/>
</dbReference>
<dbReference type="RefSeq" id="WP_002246113.1">
    <property type="nucleotide sequence ID" value="NC_003116.1"/>
</dbReference>
<dbReference type="SMR" id="Q9JUX8"/>
<dbReference type="EnsemblBacteria" id="CAM08303">
    <property type="protein sequence ID" value="CAM08303"/>
    <property type="gene ID" value="NMA1092"/>
</dbReference>
<dbReference type="GeneID" id="93386300"/>
<dbReference type="KEGG" id="nma:NMA1092"/>
<dbReference type="HOGENOM" id="CLU_053057_3_0_4"/>
<dbReference type="UniPathway" id="UPA00056">
    <property type="reaction ID" value="UER00094"/>
</dbReference>
<dbReference type="Proteomes" id="UP000000626">
    <property type="component" value="Chromosome"/>
</dbReference>
<dbReference type="GO" id="GO:0050515">
    <property type="term" value="F:4-(cytidine 5'-diphospho)-2-C-methyl-D-erythritol kinase activity"/>
    <property type="evidence" value="ECO:0007669"/>
    <property type="project" value="UniProtKB-UniRule"/>
</dbReference>
<dbReference type="GO" id="GO:0005524">
    <property type="term" value="F:ATP binding"/>
    <property type="evidence" value="ECO:0007669"/>
    <property type="project" value="UniProtKB-UniRule"/>
</dbReference>
<dbReference type="GO" id="GO:0019288">
    <property type="term" value="P:isopentenyl diphosphate biosynthetic process, methylerythritol 4-phosphate pathway"/>
    <property type="evidence" value="ECO:0007669"/>
    <property type="project" value="UniProtKB-UniRule"/>
</dbReference>
<dbReference type="GO" id="GO:0016114">
    <property type="term" value="P:terpenoid biosynthetic process"/>
    <property type="evidence" value="ECO:0007669"/>
    <property type="project" value="InterPro"/>
</dbReference>
<dbReference type="FunFam" id="3.30.230.10:FF:000108">
    <property type="entry name" value="4-diphosphocytidyl-2-C-methyl-D-erythritol kinase"/>
    <property type="match status" value="1"/>
</dbReference>
<dbReference type="FunFam" id="3.30.70.890:FF:000021">
    <property type="entry name" value="4-diphosphocytidyl-2-C-methyl-D-erythritol kinase"/>
    <property type="match status" value="1"/>
</dbReference>
<dbReference type="Gene3D" id="3.30.230.10">
    <property type="match status" value="1"/>
</dbReference>
<dbReference type="Gene3D" id="3.30.70.890">
    <property type="entry name" value="GHMP kinase, C-terminal domain"/>
    <property type="match status" value="1"/>
</dbReference>
<dbReference type="HAMAP" id="MF_00061">
    <property type="entry name" value="IspE"/>
    <property type="match status" value="1"/>
</dbReference>
<dbReference type="InterPro" id="IPR013750">
    <property type="entry name" value="GHMP_kinase_C_dom"/>
</dbReference>
<dbReference type="InterPro" id="IPR036554">
    <property type="entry name" value="GHMP_kinase_C_sf"/>
</dbReference>
<dbReference type="InterPro" id="IPR006204">
    <property type="entry name" value="GHMP_kinase_N_dom"/>
</dbReference>
<dbReference type="InterPro" id="IPR004424">
    <property type="entry name" value="IspE"/>
</dbReference>
<dbReference type="InterPro" id="IPR020568">
    <property type="entry name" value="Ribosomal_Su5_D2-typ_SF"/>
</dbReference>
<dbReference type="InterPro" id="IPR014721">
    <property type="entry name" value="Ribsml_uS5_D2-typ_fold_subgr"/>
</dbReference>
<dbReference type="NCBIfam" id="TIGR00154">
    <property type="entry name" value="ispE"/>
    <property type="match status" value="1"/>
</dbReference>
<dbReference type="PANTHER" id="PTHR43527">
    <property type="entry name" value="4-DIPHOSPHOCYTIDYL-2-C-METHYL-D-ERYTHRITOL KINASE, CHLOROPLASTIC"/>
    <property type="match status" value="1"/>
</dbReference>
<dbReference type="PANTHER" id="PTHR43527:SF2">
    <property type="entry name" value="4-DIPHOSPHOCYTIDYL-2-C-METHYL-D-ERYTHRITOL KINASE, CHLOROPLASTIC"/>
    <property type="match status" value="1"/>
</dbReference>
<dbReference type="Pfam" id="PF08544">
    <property type="entry name" value="GHMP_kinases_C"/>
    <property type="match status" value="1"/>
</dbReference>
<dbReference type="Pfam" id="PF00288">
    <property type="entry name" value="GHMP_kinases_N"/>
    <property type="match status" value="1"/>
</dbReference>
<dbReference type="PIRSF" id="PIRSF010376">
    <property type="entry name" value="IspE"/>
    <property type="match status" value="1"/>
</dbReference>
<dbReference type="SUPFAM" id="SSF55060">
    <property type="entry name" value="GHMP Kinase, C-terminal domain"/>
    <property type="match status" value="1"/>
</dbReference>
<dbReference type="SUPFAM" id="SSF54211">
    <property type="entry name" value="Ribosomal protein S5 domain 2-like"/>
    <property type="match status" value="1"/>
</dbReference>
<accession>Q9JUX8</accession>
<accession>A1IRB7</accession>
<comment type="function">
    <text evidence="1">Catalyzes the phosphorylation of the position 2 hydroxy group of 4-diphosphocytidyl-2C-methyl-D-erythritol.</text>
</comment>
<comment type="catalytic activity">
    <reaction evidence="1">
        <text>4-CDP-2-C-methyl-D-erythritol + ATP = 4-CDP-2-C-methyl-D-erythritol 2-phosphate + ADP + H(+)</text>
        <dbReference type="Rhea" id="RHEA:18437"/>
        <dbReference type="ChEBI" id="CHEBI:15378"/>
        <dbReference type="ChEBI" id="CHEBI:30616"/>
        <dbReference type="ChEBI" id="CHEBI:57823"/>
        <dbReference type="ChEBI" id="CHEBI:57919"/>
        <dbReference type="ChEBI" id="CHEBI:456216"/>
        <dbReference type="EC" id="2.7.1.148"/>
    </reaction>
</comment>
<comment type="pathway">
    <text evidence="1">Isoprenoid biosynthesis; isopentenyl diphosphate biosynthesis via DXP pathway; isopentenyl diphosphate from 1-deoxy-D-xylulose 5-phosphate: step 3/6.</text>
</comment>
<comment type="similarity">
    <text evidence="1">Belongs to the GHMP kinase family. IspE subfamily.</text>
</comment>
<proteinExistence type="inferred from homology"/>
<sequence>MSVTDGRQAFPAPAKLNLDLRITGRREDGYHNIESIFCLIDLQDTVYLKPRDDGKIILHNPVDGMPQEADLSYRAASLLQKYARTPTGVEIWLDKKIPTGAGLGGGSSDAATVLLVLNRWWQCGLTQRQLIDSGAALGADVPFFIFGKNAFARGIGDRLDEMDIPKQWYVIVKPPVHVSTAKIFTHEGLTRNSASSIMPTFQNLQPFRNDMQAVVFKEYPEVWKAYSELSRYGFALMTGSGACVFTACQDRNSAYNIYRQVSDLYEAYLAEGLSKHPLLSV</sequence>
<evidence type="ECO:0000255" key="1">
    <source>
        <dbReference type="HAMAP-Rule" id="MF_00061"/>
    </source>
</evidence>
<feature type="chain" id="PRO_0000189237" description="4-diphosphocytidyl-2-C-methyl-D-erythritol kinase">
    <location>
        <begin position="1"/>
        <end position="281"/>
    </location>
</feature>
<feature type="active site" evidence="1">
    <location>
        <position position="15"/>
    </location>
</feature>
<feature type="active site" evidence="1">
    <location>
        <position position="140"/>
    </location>
</feature>
<feature type="binding site" evidence="1">
    <location>
        <begin position="98"/>
        <end position="108"/>
    </location>
    <ligand>
        <name>ATP</name>
        <dbReference type="ChEBI" id="CHEBI:30616"/>
    </ligand>
</feature>
<protein>
    <recommendedName>
        <fullName evidence="1">4-diphosphocytidyl-2-C-methyl-D-erythritol kinase</fullName>
        <shortName evidence="1">CMK</shortName>
        <ecNumber evidence="1">2.7.1.148</ecNumber>
    </recommendedName>
    <alternativeName>
        <fullName evidence="1">4-(cytidine-5'-diphospho)-2-C-methyl-D-erythritol kinase</fullName>
    </alternativeName>
</protein>